<evidence type="ECO:0000250" key="1"/>
<evidence type="ECO:0000305" key="2"/>
<evidence type="ECO:0007829" key="3">
    <source>
        <dbReference type="PDB" id="1MP9"/>
    </source>
</evidence>
<organism>
    <name type="scientific">Sulfolobus acidocaldarius (strain ATCC 33909 / DSM 639 / JCM 8929 / NBRC 15157 / NCIMB 11770)</name>
    <dbReference type="NCBI Taxonomy" id="330779"/>
    <lineage>
        <taxon>Archaea</taxon>
        <taxon>Thermoproteota</taxon>
        <taxon>Thermoprotei</taxon>
        <taxon>Sulfolobales</taxon>
        <taxon>Sulfolobaceae</taxon>
        <taxon>Sulfolobus</taxon>
    </lineage>
</organism>
<feature type="chain" id="PRO_0000154024" description="TATA-box-binding protein">
    <location>
        <begin position="1"/>
        <end position="197"/>
    </location>
</feature>
<feature type="repeat" description="1">
    <location>
        <begin position="14"/>
        <end position="90"/>
    </location>
</feature>
<feature type="repeat" description="2">
    <location>
        <begin position="105"/>
        <end position="181"/>
    </location>
</feature>
<feature type="strand" evidence="3">
    <location>
        <begin position="11"/>
        <end position="22"/>
    </location>
</feature>
<feature type="helix" evidence="3">
    <location>
        <begin position="29"/>
        <end position="35"/>
    </location>
</feature>
<feature type="turn" evidence="3">
    <location>
        <begin position="43"/>
        <end position="45"/>
    </location>
</feature>
<feature type="strand" evidence="3">
    <location>
        <begin position="47"/>
        <end position="53"/>
    </location>
</feature>
<feature type="turn" evidence="3">
    <location>
        <begin position="54"/>
        <end position="57"/>
    </location>
</feature>
<feature type="strand" evidence="3">
    <location>
        <begin position="58"/>
        <end position="62"/>
    </location>
</feature>
<feature type="strand" evidence="3">
    <location>
        <begin position="66"/>
        <end position="71"/>
    </location>
</feature>
<feature type="helix" evidence="3">
    <location>
        <begin position="76"/>
        <end position="92"/>
    </location>
</feature>
<feature type="strand" evidence="3">
    <location>
        <begin position="102"/>
        <end position="113"/>
    </location>
</feature>
<feature type="strand" evidence="3">
    <location>
        <begin position="115"/>
        <end position="118"/>
    </location>
</feature>
<feature type="helix" evidence="3">
    <location>
        <begin position="120"/>
        <end position="126"/>
    </location>
</feature>
<feature type="strand" evidence="3">
    <location>
        <begin position="127"/>
        <end position="131"/>
    </location>
</feature>
<feature type="turn" evidence="3">
    <location>
        <begin position="134"/>
        <end position="136"/>
    </location>
</feature>
<feature type="strand" evidence="3">
    <location>
        <begin position="138"/>
        <end position="144"/>
    </location>
</feature>
<feature type="turn" evidence="3">
    <location>
        <begin position="145"/>
        <end position="148"/>
    </location>
</feature>
<feature type="strand" evidence="3">
    <location>
        <begin position="149"/>
        <end position="153"/>
    </location>
</feature>
<feature type="strand" evidence="3">
    <location>
        <begin position="157"/>
        <end position="166"/>
    </location>
</feature>
<feature type="helix" evidence="3">
    <location>
        <begin position="167"/>
        <end position="183"/>
    </location>
</feature>
<comment type="function">
    <text evidence="1">General factor that plays a role in the activation of archaeal genes transcribed by RNA polymerase. Binds specifically to the TATA box promoter element which lies close to the position of transcription initiation (By similarity).</text>
</comment>
<comment type="similarity">
    <text evidence="2">Belongs to the TBP family.</text>
</comment>
<comment type="sequence caution" evidence="2">
    <conflict type="erroneous initiation">
        <sequence resource="EMBL-CDS" id="AAY80671"/>
    </conflict>
</comment>
<comment type="sequence caution" evidence="2">
    <conflict type="erroneous initiation">
        <sequence resource="EMBL-CDS" id="CAA64405"/>
    </conflict>
</comment>
<keyword id="KW-0002">3D-structure</keyword>
<keyword id="KW-0238">DNA-binding</keyword>
<keyword id="KW-1185">Reference proteome</keyword>
<keyword id="KW-0677">Repeat</keyword>
<keyword id="KW-0804">Transcription</keyword>
<keyword id="KW-0805">Transcription regulation</keyword>
<reference key="1">
    <citation type="submission" date="1996-01" db="EMBL/GenBank/DDBJ databases">
        <title>Functional analysis of the TBP-homologous box A binding protein of the extremely thermophilic archaeon Sulfolobus acidocaldarius.</title>
        <authorList>
            <person name="Lanzendorfer M."/>
            <person name="Hain J."/>
            <person name="Grampp B."/>
            <person name="Lottspeich F."/>
            <person name="Zillig W."/>
        </authorList>
    </citation>
    <scope>NUCLEOTIDE SEQUENCE [GENOMIC DNA]</scope>
</reference>
<reference key="2">
    <citation type="submission" date="1999-11" db="EMBL/GenBank/DDBJ databases">
        <title>The role of TFB in transcription initiation and promoter clearance in the archaeon Sulfolobus acidocaldarius.</title>
        <authorList>
            <person name="Bell S.D."/>
            <person name="Jackson S.P."/>
        </authorList>
    </citation>
    <scope>NUCLEOTIDE SEQUENCE [GENOMIC DNA]</scope>
</reference>
<reference key="3">
    <citation type="journal article" date="2005" name="J. Bacteriol.">
        <title>The genome of Sulfolobus acidocaldarius, a model organism of the Crenarchaeota.</title>
        <authorList>
            <person name="Chen L."/>
            <person name="Bruegger K."/>
            <person name="Skovgaard M."/>
            <person name="Redder P."/>
            <person name="She Q."/>
            <person name="Torarinsson E."/>
            <person name="Greve B."/>
            <person name="Awayez M."/>
            <person name="Zibat A."/>
            <person name="Klenk H.-P."/>
            <person name="Garrett R.A."/>
        </authorList>
    </citation>
    <scope>NUCLEOTIDE SEQUENCE [LARGE SCALE GENOMIC DNA]</scope>
    <source>
        <strain>ATCC 33909 / DSM 639 / JCM 8929 / NBRC 15157 / NCIMB 11770</strain>
    </source>
</reference>
<reference key="4">
    <citation type="journal article" date="2004" name="Structure">
        <title>Origins of protein stability revealed by comparing crystal structures of TATA binding proteins.</title>
        <authorList>
            <person name="Koike H."/>
            <person name="Kawashima-Ohya Y."/>
            <person name="Yamasaki T."/>
            <person name="Clowney L."/>
            <person name="Katsuya Y."/>
            <person name="Suzuki M."/>
        </authorList>
    </citation>
    <scope>X-RAY CRYSTALLOGRAPHY (2.0 ANGSTROMS) OF 2-197</scope>
</reference>
<gene>
    <name type="primary">tbp</name>
    <name type="ordered locus">Saci_1336</name>
</gene>
<sequence length="197" mass="22325">MIPDEIPYKAVVNIENIVATVTLDQTLDLYAMERSVPNVEYDPDQFPGLIFRLESPKITSLIFKSGKMVVTGAKSTDELIKAVKRIIKTLKKYGMQLTGKPKIQIQNIVASANLHVIVNLDKAAFLLENNMYEPEQFPGLIYRMDEPRVVLLIFSSGKMVITGAKREDEVHKAVKKIFDKLVELDCVKPVEEEELEF</sequence>
<name>TBP_SULAC</name>
<accession>Q9UWN7</accession>
<accession>Q4J956</accession>
<accession>Q53648</accession>
<proteinExistence type="evidence at protein level"/>
<protein>
    <recommendedName>
        <fullName>TATA-box-binding protein</fullName>
    </recommendedName>
    <alternativeName>
        <fullName>Box A-binding protein</fullName>
        <shortName>BAP</shortName>
    </alternativeName>
    <alternativeName>
        <fullName>TATA sequence-binding protein</fullName>
        <shortName>TBP</shortName>
    </alternativeName>
    <alternativeName>
        <fullName>TATA-box factor</fullName>
    </alternativeName>
</protein>
<dbReference type="EMBL" id="X94935">
    <property type="protein sequence ID" value="CAA64405.1"/>
    <property type="status" value="ALT_INIT"/>
    <property type="molecule type" value="Genomic_DNA"/>
</dbReference>
<dbReference type="EMBL" id="AF205428">
    <property type="protein sequence ID" value="AAF18138.1"/>
    <property type="molecule type" value="Genomic_DNA"/>
</dbReference>
<dbReference type="EMBL" id="CP000077">
    <property type="protein sequence ID" value="AAY80671.1"/>
    <property type="status" value="ALT_INIT"/>
    <property type="molecule type" value="Genomic_DNA"/>
</dbReference>
<dbReference type="PDB" id="1MP9">
    <property type="method" value="X-ray"/>
    <property type="resolution" value="2.00 A"/>
    <property type="chains" value="A/B=2-197"/>
</dbReference>
<dbReference type="PDBsum" id="1MP9"/>
<dbReference type="SMR" id="Q9UWN7"/>
<dbReference type="STRING" id="330779.Saci_1336"/>
<dbReference type="KEGG" id="sai:Saci_1336"/>
<dbReference type="PATRIC" id="fig|330779.12.peg.1289"/>
<dbReference type="eggNOG" id="arCOG01764">
    <property type="taxonomic scope" value="Archaea"/>
</dbReference>
<dbReference type="HOGENOM" id="CLU_060161_4_3_2"/>
<dbReference type="EvolutionaryTrace" id="Q9UWN7"/>
<dbReference type="Proteomes" id="UP000001018">
    <property type="component" value="Chromosome"/>
</dbReference>
<dbReference type="GO" id="GO:0003677">
    <property type="term" value="F:DNA binding"/>
    <property type="evidence" value="ECO:0007669"/>
    <property type="project" value="UniProtKB-KW"/>
</dbReference>
<dbReference type="GO" id="GO:0003700">
    <property type="term" value="F:DNA-binding transcription factor activity"/>
    <property type="evidence" value="ECO:0007669"/>
    <property type="project" value="UniProtKB-UniRule"/>
</dbReference>
<dbReference type="GO" id="GO:0006352">
    <property type="term" value="P:DNA-templated transcription initiation"/>
    <property type="evidence" value="ECO:0007669"/>
    <property type="project" value="InterPro"/>
</dbReference>
<dbReference type="CDD" id="cd04518">
    <property type="entry name" value="TBP_archaea"/>
    <property type="match status" value="1"/>
</dbReference>
<dbReference type="FunFam" id="3.30.310.10:FF:000007">
    <property type="entry name" value="TATA-box-binding protein"/>
    <property type="match status" value="1"/>
</dbReference>
<dbReference type="FunFam" id="3.30.310.10:FF:000010">
    <property type="entry name" value="TATA-box-binding protein"/>
    <property type="match status" value="1"/>
</dbReference>
<dbReference type="Gene3D" id="3.30.310.10">
    <property type="entry name" value="TATA-Binding Protein"/>
    <property type="match status" value="2"/>
</dbReference>
<dbReference type="HAMAP" id="MF_00408">
    <property type="entry name" value="TATA_bind_prot_arch"/>
    <property type="match status" value="1"/>
</dbReference>
<dbReference type="InterPro" id="IPR000814">
    <property type="entry name" value="TBP"/>
</dbReference>
<dbReference type="InterPro" id="IPR033711">
    <property type="entry name" value="TBP_archaea"/>
</dbReference>
<dbReference type="InterPro" id="IPR030491">
    <property type="entry name" value="TBP_CS"/>
</dbReference>
<dbReference type="InterPro" id="IPR012295">
    <property type="entry name" value="TBP_dom_sf"/>
</dbReference>
<dbReference type="NCBIfam" id="NF001592">
    <property type="entry name" value="PRK00394.1-1"/>
    <property type="match status" value="1"/>
</dbReference>
<dbReference type="NCBIfam" id="NF001593">
    <property type="entry name" value="PRK00394.1-2"/>
    <property type="match status" value="1"/>
</dbReference>
<dbReference type="PANTHER" id="PTHR10126">
    <property type="entry name" value="TATA-BOX BINDING PROTEIN"/>
    <property type="match status" value="1"/>
</dbReference>
<dbReference type="Pfam" id="PF00352">
    <property type="entry name" value="TBP"/>
    <property type="match status" value="2"/>
</dbReference>
<dbReference type="PRINTS" id="PR00686">
    <property type="entry name" value="TIFACTORIID"/>
</dbReference>
<dbReference type="SUPFAM" id="SSF55945">
    <property type="entry name" value="TATA-box binding protein-like"/>
    <property type="match status" value="2"/>
</dbReference>
<dbReference type="PROSITE" id="PS00351">
    <property type="entry name" value="TFIID"/>
    <property type="match status" value="2"/>
</dbReference>